<name>PSD_PSEAB</name>
<reference key="1">
    <citation type="journal article" date="2006" name="Genome Biol.">
        <title>Genomic analysis reveals that Pseudomonas aeruginosa virulence is combinatorial.</title>
        <authorList>
            <person name="Lee D.G."/>
            <person name="Urbach J.M."/>
            <person name="Wu G."/>
            <person name="Liberati N.T."/>
            <person name="Feinbaum R.L."/>
            <person name="Miyata S."/>
            <person name="Diggins L.T."/>
            <person name="He J."/>
            <person name="Saucier M."/>
            <person name="Deziel E."/>
            <person name="Friedman L."/>
            <person name="Li L."/>
            <person name="Grills G."/>
            <person name="Montgomery K."/>
            <person name="Kucherlapati R."/>
            <person name="Rahme L.G."/>
            <person name="Ausubel F.M."/>
        </authorList>
    </citation>
    <scope>NUCLEOTIDE SEQUENCE [LARGE SCALE GENOMIC DNA]</scope>
    <source>
        <strain>UCBPP-PA14</strain>
    </source>
</reference>
<accession>Q02F61</accession>
<comment type="function">
    <text evidence="1">Catalyzes the formation of phosphatidylethanolamine (PtdEtn) from phosphatidylserine (PtdSer).</text>
</comment>
<comment type="catalytic activity">
    <reaction evidence="1">
        <text>a 1,2-diacyl-sn-glycero-3-phospho-L-serine + H(+) = a 1,2-diacyl-sn-glycero-3-phosphoethanolamine + CO2</text>
        <dbReference type="Rhea" id="RHEA:20828"/>
        <dbReference type="ChEBI" id="CHEBI:15378"/>
        <dbReference type="ChEBI" id="CHEBI:16526"/>
        <dbReference type="ChEBI" id="CHEBI:57262"/>
        <dbReference type="ChEBI" id="CHEBI:64612"/>
        <dbReference type="EC" id="4.1.1.65"/>
    </reaction>
</comment>
<comment type="cofactor">
    <cofactor evidence="1">
        <name>pyruvate</name>
        <dbReference type="ChEBI" id="CHEBI:15361"/>
    </cofactor>
    <text evidence="1">Binds 1 pyruvoyl group covalently per subunit.</text>
</comment>
<comment type="pathway">
    <text evidence="1">Phospholipid metabolism; phosphatidylethanolamine biosynthesis; phosphatidylethanolamine from CDP-diacylglycerol: step 2/2.</text>
</comment>
<comment type="subunit">
    <text evidence="1">Heterodimer of a large membrane-associated beta subunit and a small pyruvoyl-containing alpha subunit.</text>
</comment>
<comment type="subcellular location">
    <subcellularLocation>
        <location evidence="1">Cell membrane</location>
        <topology evidence="1">Peripheral membrane protein</topology>
    </subcellularLocation>
</comment>
<comment type="PTM">
    <text evidence="1">Is synthesized initially as an inactive proenzyme. Formation of the active enzyme involves a self-maturation process in which the active site pyruvoyl group is generated from an internal serine residue via an autocatalytic post-translational modification. Two non-identical subunits are generated from the proenzyme in this reaction, and the pyruvate is formed at the N-terminus of the alpha chain, which is derived from the carboxyl end of the proenzyme. The autoendoproteolytic cleavage occurs by a canonical serine protease mechanism, in which the side chain hydroxyl group of the serine supplies its oxygen atom to form the C-terminus of the beta chain, while the remainder of the serine residue undergoes an oxidative deamination to produce ammonia and the pyruvoyl prosthetic group on the alpha chain. During this reaction, the Ser that is part of the protease active site of the proenzyme becomes the pyruvoyl prosthetic group, which constitutes an essential element of the active site of the mature decarboxylase.</text>
</comment>
<comment type="similarity">
    <text evidence="1">Belongs to the phosphatidylserine decarboxylase family. PSD-B subfamily. Prokaryotic type I sub-subfamily.</text>
</comment>
<protein>
    <recommendedName>
        <fullName evidence="1">Phosphatidylserine decarboxylase proenzyme</fullName>
        <ecNumber evidence="1">4.1.1.65</ecNumber>
    </recommendedName>
    <component>
        <recommendedName>
            <fullName evidence="1">Phosphatidylserine decarboxylase alpha chain</fullName>
        </recommendedName>
    </component>
    <component>
        <recommendedName>
            <fullName evidence="1">Phosphatidylserine decarboxylase beta chain</fullName>
        </recommendedName>
    </component>
</protein>
<evidence type="ECO:0000255" key="1">
    <source>
        <dbReference type="HAMAP-Rule" id="MF_00662"/>
    </source>
</evidence>
<dbReference type="EC" id="4.1.1.65" evidence="1"/>
<dbReference type="EMBL" id="CP000438">
    <property type="protein sequence ID" value="ABJ14342.1"/>
    <property type="molecule type" value="Genomic_DNA"/>
</dbReference>
<dbReference type="SMR" id="Q02F61"/>
<dbReference type="KEGG" id="pau:PA14_65500"/>
<dbReference type="PseudoCAP" id="PA14_65500"/>
<dbReference type="HOGENOM" id="CLU_029061_4_1_6"/>
<dbReference type="BioCyc" id="PAER208963:G1G74-5532-MONOMER"/>
<dbReference type="UniPathway" id="UPA00558">
    <property type="reaction ID" value="UER00616"/>
</dbReference>
<dbReference type="Proteomes" id="UP000000653">
    <property type="component" value="Chromosome"/>
</dbReference>
<dbReference type="GO" id="GO:0005886">
    <property type="term" value="C:plasma membrane"/>
    <property type="evidence" value="ECO:0007669"/>
    <property type="project" value="UniProtKB-SubCell"/>
</dbReference>
<dbReference type="GO" id="GO:0004609">
    <property type="term" value="F:phosphatidylserine decarboxylase activity"/>
    <property type="evidence" value="ECO:0007669"/>
    <property type="project" value="UniProtKB-UniRule"/>
</dbReference>
<dbReference type="GO" id="GO:0006646">
    <property type="term" value="P:phosphatidylethanolamine biosynthetic process"/>
    <property type="evidence" value="ECO:0007669"/>
    <property type="project" value="UniProtKB-UniRule"/>
</dbReference>
<dbReference type="HAMAP" id="MF_00662">
    <property type="entry name" value="PS_decarb_PSD_B_type1"/>
    <property type="match status" value="1"/>
</dbReference>
<dbReference type="InterPro" id="IPR003817">
    <property type="entry name" value="PS_Dcarbxylase"/>
</dbReference>
<dbReference type="InterPro" id="IPR033177">
    <property type="entry name" value="PSD-B"/>
</dbReference>
<dbReference type="InterPro" id="IPR033178">
    <property type="entry name" value="PSD_type1_pro"/>
</dbReference>
<dbReference type="NCBIfam" id="TIGR00163">
    <property type="entry name" value="PS_decarb"/>
    <property type="match status" value="1"/>
</dbReference>
<dbReference type="PANTHER" id="PTHR10067">
    <property type="entry name" value="PHOSPHATIDYLSERINE DECARBOXYLASE"/>
    <property type="match status" value="1"/>
</dbReference>
<dbReference type="PANTHER" id="PTHR10067:SF6">
    <property type="entry name" value="PHOSPHATIDYLSERINE DECARBOXYLASE PROENZYME, MITOCHONDRIAL"/>
    <property type="match status" value="1"/>
</dbReference>
<dbReference type="Pfam" id="PF02666">
    <property type="entry name" value="PS_Dcarbxylase"/>
    <property type="match status" value="1"/>
</dbReference>
<keyword id="KW-1003">Cell membrane</keyword>
<keyword id="KW-0210">Decarboxylase</keyword>
<keyword id="KW-0444">Lipid biosynthesis</keyword>
<keyword id="KW-0443">Lipid metabolism</keyword>
<keyword id="KW-0456">Lyase</keyword>
<keyword id="KW-0472">Membrane</keyword>
<keyword id="KW-0594">Phospholipid biosynthesis</keyword>
<keyword id="KW-1208">Phospholipid metabolism</keyword>
<keyword id="KW-0670">Pyruvate</keyword>
<keyword id="KW-0865">Zymogen</keyword>
<organism>
    <name type="scientific">Pseudomonas aeruginosa (strain UCBPP-PA14)</name>
    <dbReference type="NCBI Taxonomy" id="208963"/>
    <lineage>
        <taxon>Bacteria</taxon>
        <taxon>Pseudomonadati</taxon>
        <taxon>Pseudomonadota</taxon>
        <taxon>Gammaproteobacteria</taxon>
        <taxon>Pseudomonadales</taxon>
        <taxon>Pseudomonadaceae</taxon>
        <taxon>Pseudomonas</taxon>
    </lineage>
</organism>
<sequence>MSFKDRLFICSQYLLPHHLLSRLIGFAADCRATWFKDRLIAWFARRYQVDMREAQVEDLQAYEHFNAFFTRALKDGARPLAQEPGAVLCPADGAISQLGPIEHGRIFQAKGHSYSLAELLGGDAELAAPFMGGDFATVYLSPRDYHRVHMPLAGTLREMVYVPGRLFSVNQTTAENVPELFARNERVVCLFDTERGPMAVVLVGAMIVASIETVWAGLVTPPKRELKTFRYDEAARAPIRLEKGAELGRFKLGSTAIVLFGPQQVAFNDGLGAASPVRMGECLALPKQA</sequence>
<gene>
    <name evidence="1" type="primary">psd</name>
    <name type="ordered locus">PA14_65500</name>
</gene>
<feature type="chain" id="PRO_1000026566" description="Phosphatidylserine decarboxylase beta chain" evidence="1">
    <location>
        <begin position="1"/>
        <end position="253"/>
    </location>
</feature>
<feature type="chain" id="PRO_1000026567" description="Phosphatidylserine decarboxylase alpha chain" evidence="1">
    <location>
        <begin position="254"/>
        <end position="289"/>
    </location>
</feature>
<feature type="active site" description="Charge relay system; for autoendoproteolytic cleavage activity" evidence="1">
    <location>
        <position position="92"/>
    </location>
</feature>
<feature type="active site" description="Charge relay system; for autoendoproteolytic cleavage activity" evidence="1">
    <location>
        <position position="149"/>
    </location>
</feature>
<feature type="active site" description="Charge relay system; for autoendoproteolytic cleavage activity" evidence="1">
    <location>
        <position position="254"/>
    </location>
</feature>
<feature type="active site" description="Schiff-base intermediate with substrate; via pyruvic acid; for decarboxylase activity" evidence="1">
    <location>
        <position position="254"/>
    </location>
</feature>
<feature type="site" description="Cleavage (non-hydrolytic); by autocatalysis" evidence="1">
    <location>
        <begin position="253"/>
        <end position="254"/>
    </location>
</feature>
<feature type="modified residue" description="Pyruvic acid (Ser); by autocatalysis" evidence="1">
    <location>
        <position position="254"/>
    </location>
</feature>
<proteinExistence type="inferred from homology"/>